<reference key="1">
    <citation type="journal article" date="2001" name="Gene">
        <title>Identification and characterization of the human MOG1 gene.</title>
        <authorList>
            <person name="Marfatia K.A."/>
            <person name="Harreman M.T."/>
            <person name="Fanara P."/>
            <person name="Vertino P.M."/>
            <person name="Corbett A.H."/>
        </authorList>
    </citation>
    <scope>NUCLEOTIDE SEQUENCE [MRNA] (ISOFORMS 1 AND 2)</scope>
    <scope>FUNCTION</scope>
    <scope>INTERACTION WITH RAN</scope>
    <scope>SUBCELLULAR LOCATION</scope>
    <scope>TISSUE SPECIFICITY</scope>
</reference>
<reference key="2">
    <citation type="submission" date="1999-07" db="EMBL/GenBank/DDBJ databases">
        <title>Novel genes expressed in hematopoietic stem/progenitor cells from Myelodysplastic Syndromes patient.</title>
        <authorList>
            <person name="Huang C."/>
            <person name="Zhang C."/>
            <person name="Tu Y."/>
            <person name="Gu W."/>
            <person name="Wang Y."/>
            <person name="Han Z."/>
            <person name="Chen Z."/>
            <person name="Zhou J."/>
            <person name="Gu J."/>
            <person name="Huang Q."/>
            <person name="Yu Y."/>
            <person name="Xu S."/>
            <person name="Ren S."/>
            <person name="Fu G."/>
        </authorList>
    </citation>
    <scope>NUCLEOTIDE SEQUENCE [LARGE SCALE MRNA] (ISOFORM 1)</scope>
    <source>
        <tissue>Hematopoietic stem cell</tissue>
    </source>
</reference>
<reference key="3">
    <citation type="journal article" date="2000" name="Genome Res.">
        <title>Cloning and functional analysis of cDNAs with open reading frames for 300 previously undefined genes expressed in CD34+ hematopoietic stem/progenitor cells.</title>
        <authorList>
            <person name="Zhang Q.-H."/>
            <person name="Ye M."/>
            <person name="Wu X.-Y."/>
            <person name="Ren S.-X."/>
            <person name="Zhao M."/>
            <person name="Zhao C.-J."/>
            <person name="Fu G."/>
            <person name="Shen Y."/>
            <person name="Fan H.-Y."/>
            <person name="Lu G."/>
            <person name="Zhong M."/>
            <person name="Xu X.-R."/>
            <person name="Han Z.-G."/>
            <person name="Zhang J.-W."/>
            <person name="Tao J."/>
            <person name="Huang Q.-H."/>
            <person name="Zhou J."/>
            <person name="Hu G.-X."/>
            <person name="Gu J."/>
            <person name="Chen S.-J."/>
            <person name="Chen Z."/>
        </authorList>
    </citation>
    <scope>NUCLEOTIDE SEQUENCE [LARGE SCALE MRNA] (ISOFORM 1)</scope>
    <source>
        <tissue>Umbilical cord blood</tissue>
    </source>
</reference>
<reference key="4">
    <citation type="journal article" date="2004" name="Nat. Genet.">
        <title>Complete sequencing and characterization of 21,243 full-length human cDNAs.</title>
        <authorList>
            <person name="Ota T."/>
            <person name="Suzuki Y."/>
            <person name="Nishikawa T."/>
            <person name="Otsuki T."/>
            <person name="Sugiyama T."/>
            <person name="Irie R."/>
            <person name="Wakamatsu A."/>
            <person name="Hayashi K."/>
            <person name="Sato H."/>
            <person name="Nagai K."/>
            <person name="Kimura K."/>
            <person name="Makita H."/>
            <person name="Sekine M."/>
            <person name="Obayashi M."/>
            <person name="Nishi T."/>
            <person name="Shibahara T."/>
            <person name="Tanaka T."/>
            <person name="Ishii S."/>
            <person name="Yamamoto J."/>
            <person name="Saito K."/>
            <person name="Kawai Y."/>
            <person name="Isono Y."/>
            <person name="Nakamura Y."/>
            <person name="Nagahari K."/>
            <person name="Murakami K."/>
            <person name="Yasuda T."/>
            <person name="Iwayanagi T."/>
            <person name="Wagatsuma M."/>
            <person name="Shiratori A."/>
            <person name="Sudo H."/>
            <person name="Hosoiri T."/>
            <person name="Kaku Y."/>
            <person name="Kodaira H."/>
            <person name="Kondo H."/>
            <person name="Sugawara M."/>
            <person name="Takahashi M."/>
            <person name="Kanda K."/>
            <person name="Yokoi T."/>
            <person name="Furuya T."/>
            <person name="Kikkawa E."/>
            <person name="Omura Y."/>
            <person name="Abe K."/>
            <person name="Kamihara K."/>
            <person name="Katsuta N."/>
            <person name="Sato K."/>
            <person name="Tanikawa M."/>
            <person name="Yamazaki M."/>
            <person name="Ninomiya K."/>
            <person name="Ishibashi T."/>
            <person name="Yamashita H."/>
            <person name="Murakawa K."/>
            <person name="Fujimori K."/>
            <person name="Tanai H."/>
            <person name="Kimata M."/>
            <person name="Watanabe M."/>
            <person name="Hiraoka S."/>
            <person name="Chiba Y."/>
            <person name="Ishida S."/>
            <person name="Ono Y."/>
            <person name="Takiguchi S."/>
            <person name="Watanabe S."/>
            <person name="Yosida M."/>
            <person name="Hotuta T."/>
            <person name="Kusano J."/>
            <person name="Kanehori K."/>
            <person name="Takahashi-Fujii A."/>
            <person name="Hara H."/>
            <person name="Tanase T.-O."/>
            <person name="Nomura Y."/>
            <person name="Togiya S."/>
            <person name="Komai F."/>
            <person name="Hara R."/>
            <person name="Takeuchi K."/>
            <person name="Arita M."/>
            <person name="Imose N."/>
            <person name="Musashino K."/>
            <person name="Yuuki H."/>
            <person name="Oshima A."/>
            <person name="Sasaki N."/>
            <person name="Aotsuka S."/>
            <person name="Yoshikawa Y."/>
            <person name="Matsunawa H."/>
            <person name="Ichihara T."/>
            <person name="Shiohata N."/>
            <person name="Sano S."/>
            <person name="Moriya S."/>
            <person name="Momiyama H."/>
            <person name="Satoh N."/>
            <person name="Takami S."/>
            <person name="Terashima Y."/>
            <person name="Suzuki O."/>
            <person name="Nakagawa S."/>
            <person name="Senoh A."/>
            <person name="Mizoguchi H."/>
            <person name="Goto Y."/>
            <person name="Shimizu F."/>
            <person name="Wakebe H."/>
            <person name="Hishigaki H."/>
            <person name="Watanabe T."/>
            <person name="Sugiyama A."/>
            <person name="Takemoto M."/>
            <person name="Kawakami B."/>
            <person name="Yamazaki M."/>
            <person name="Watanabe K."/>
            <person name="Kumagai A."/>
            <person name="Itakura S."/>
            <person name="Fukuzumi Y."/>
            <person name="Fujimori Y."/>
            <person name="Komiyama M."/>
            <person name="Tashiro H."/>
            <person name="Tanigami A."/>
            <person name="Fujiwara T."/>
            <person name="Ono T."/>
            <person name="Yamada K."/>
            <person name="Fujii Y."/>
            <person name="Ozaki K."/>
            <person name="Hirao M."/>
            <person name="Ohmori Y."/>
            <person name="Kawabata A."/>
            <person name="Hikiji T."/>
            <person name="Kobatake N."/>
            <person name="Inagaki H."/>
            <person name="Ikema Y."/>
            <person name="Okamoto S."/>
            <person name="Okitani R."/>
            <person name="Kawakami T."/>
            <person name="Noguchi S."/>
            <person name="Itoh T."/>
            <person name="Shigeta K."/>
            <person name="Senba T."/>
            <person name="Matsumura K."/>
            <person name="Nakajima Y."/>
            <person name="Mizuno T."/>
            <person name="Morinaga M."/>
            <person name="Sasaki M."/>
            <person name="Togashi T."/>
            <person name="Oyama M."/>
            <person name="Hata H."/>
            <person name="Watanabe M."/>
            <person name="Komatsu T."/>
            <person name="Mizushima-Sugano J."/>
            <person name="Satoh T."/>
            <person name="Shirai Y."/>
            <person name="Takahashi Y."/>
            <person name="Nakagawa K."/>
            <person name="Okumura K."/>
            <person name="Nagase T."/>
            <person name="Nomura N."/>
            <person name="Kikuchi H."/>
            <person name="Masuho Y."/>
            <person name="Yamashita R."/>
            <person name="Nakai K."/>
            <person name="Yada T."/>
            <person name="Nakamura Y."/>
            <person name="Ohara O."/>
            <person name="Isogai T."/>
            <person name="Sugano S."/>
        </authorList>
    </citation>
    <scope>NUCLEOTIDE SEQUENCE [LARGE SCALE MRNA] (ISOFORM 2)</scope>
    <source>
        <tissue>Umbilical cord blood</tissue>
    </source>
</reference>
<reference key="5">
    <citation type="submission" date="2004-06" db="EMBL/GenBank/DDBJ databases">
        <title>Cloning of human full open reading frames in Gateway(TM) system entry vector (pDONR201).</title>
        <authorList>
            <person name="Ebert L."/>
            <person name="Schick M."/>
            <person name="Neubert P."/>
            <person name="Schatten R."/>
            <person name="Henze S."/>
            <person name="Korn B."/>
        </authorList>
    </citation>
    <scope>NUCLEOTIDE SEQUENCE [LARGE SCALE MRNA] (ISOFORM 2)</scope>
</reference>
<reference key="6">
    <citation type="journal article" date="2007" name="BMC Genomics">
        <title>The full-ORF clone resource of the German cDNA consortium.</title>
        <authorList>
            <person name="Bechtel S."/>
            <person name="Rosenfelder H."/>
            <person name="Duda A."/>
            <person name="Schmidt C.P."/>
            <person name="Ernst U."/>
            <person name="Wellenreuther R."/>
            <person name="Mehrle A."/>
            <person name="Schuster C."/>
            <person name="Bahr A."/>
            <person name="Bloecker H."/>
            <person name="Heubner D."/>
            <person name="Hoerlein A."/>
            <person name="Michel G."/>
            <person name="Wedler H."/>
            <person name="Koehrer K."/>
            <person name="Ottenwaelder B."/>
            <person name="Poustka A."/>
            <person name="Wiemann S."/>
            <person name="Schupp I."/>
        </authorList>
    </citation>
    <scope>NUCLEOTIDE SEQUENCE [LARGE SCALE MRNA] (ISOFORM 4)</scope>
    <source>
        <tissue>Prostate</tissue>
    </source>
</reference>
<reference key="7">
    <citation type="submission" date="2008-02" db="EMBL/GenBank/DDBJ databases">
        <authorList>
            <person name="Mural R.J."/>
            <person name="Istrail S."/>
            <person name="Sutton G.G."/>
            <person name="Florea L."/>
            <person name="Halpern A.L."/>
            <person name="Mobarry C.M."/>
            <person name="Lippert R."/>
            <person name="Walenz B."/>
            <person name="Shatkay H."/>
            <person name="Dew I."/>
            <person name="Miller J.R."/>
            <person name="Flanigan M.J."/>
            <person name="Edwards N.J."/>
            <person name="Bolanos R."/>
            <person name="Fasulo D."/>
            <person name="Halldorsson B.V."/>
            <person name="Hannenhalli S."/>
            <person name="Turner R."/>
            <person name="Yooseph S."/>
            <person name="Lu F."/>
            <person name="Nusskern D.R."/>
            <person name="Shue B.C."/>
            <person name="Zheng X.H."/>
            <person name="Zhong F."/>
            <person name="Delcher A.L."/>
            <person name="Huson D.H."/>
            <person name="Kravitz S.A."/>
            <person name="Mouchard L."/>
            <person name="Reinert K."/>
            <person name="Remington K.A."/>
            <person name="Clark A.G."/>
            <person name="Waterman M.S."/>
            <person name="Eichler E.E."/>
            <person name="Adams M.D."/>
            <person name="Hunkapiller M.W."/>
            <person name="Myers E.W."/>
            <person name="Venter J.C."/>
        </authorList>
    </citation>
    <scope>NUCLEOTIDE SEQUENCE [LARGE SCALE GENOMIC DNA]</scope>
</reference>
<reference key="8">
    <citation type="submission" date="2005-09" db="EMBL/GenBank/DDBJ databases">
        <authorList>
            <person name="Mural R.J."/>
            <person name="Istrail S."/>
            <person name="Sutton G.G."/>
            <person name="Florea L."/>
            <person name="Halpern A.L."/>
            <person name="Mobarry C.M."/>
            <person name="Lippert R."/>
            <person name="Walenz B."/>
            <person name="Shatkay H."/>
            <person name="Dew I."/>
            <person name="Miller J.R."/>
            <person name="Flanigan M.J."/>
            <person name="Edwards N.J."/>
            <person name="Bolanos R."/>
            <person name="Fasulo D."/>
            <person name="Halldorsson B.V."/>
            <person name="Hannenhalli S."/>
            <person name="Turner R."/>
            <person name="Yooseph S."/>
            <person name="Lu F."/>
            <person name="Nusskern D.R."/>
            <person name="Shue B.C."/>
            <person name="Zheng X.H."/>
            <person name="Zhong F."/>
            <person name="Delcher A.L."/>
            <person name="Huson D.H."/>
            <person name="Kravitz S.A."/>
            <person name="Mouchard L."/>
            <person name="Reinert K."/>
            <person name="Remington K.A."/>
            <person name="Clark A.G."/>
            <person name="Waterman M.S."/>
            <person name="Eichler E.E."/>
            <person name="Adams M.D."/>
            <person name="Hunkapiller M.W."/>
            <person name="Myers E.W."/>
            <person name="Venter J.C."/>
        </authorList>
    </citation>
    <scope>NUCLEOTIDE SEQUENCE [LARGE SCALE GENOMIC DNA]</scope>
</reference>
<reference key="9">
    <citation type="journal article" date="2004" name="Genome Res.">
        <title>The status, quality, and expansion of the NIH full-length cDNA project: the Mammalian Gene Collection (MGC).</title>
        <authorList>
            <consortium name="The MGC Project Team"/>
        </authorList>
    </citation>
    <scope>NUCLEOTIDE SEQUENCE [LARGE SCALE MRNA] (ISOFORMS 2 AND 3)</scope>
    <source>
        <tissue>Bone marrow</tissue>
        <tissue>Lung</tissue>
        <tissue>Uterus</tissue>
    </source>
</reference>
<reference key="10">
    <citation type="journal article" date="2008" name="J. Biol. Chem.">
        <title>Identification of a new co-factor, MOG1, required for the full function of cardiac sodium channel Nav1.5.</title>
        <authorList>
            <person name="Wu L."/>
            <person name="Yong S.L."/>
            <person name="Fan C."/>
            <person name="Ni Y."/>
            <person name="Yoo S."/>
            <person name="Zhang T."/>
            <person name="Zhang X."/>
            <person name="Obejero-Paz C.A."/>
            <person name="Rho H.J."/>
            <person name="Ke T."/>
            <person name="Szafranski P."/>
            <person name="Jones S.W."/>
            <person name="Chen Q."/>
            <person name="Wang Q.K."/>
        </authorList>
    </citation>
    <scope>FUNCTION</scope>
    <scope>INTERACTION WITH SCN5A</scope>
</reference>
<reference key="11">
    <citation type="journal article" date="2011" name="BMC Syst. Biol.">
        <title>Initial characterization of the human central proteome.</title>
        <authorList>
            <person name="Burkard T.R."/>
            <person name="Planyavsky M."/>
            <person name="Kaupe I."/>
            <person name="Breitwieser F.P."/>
            <person name="Buerckstuemmer T."/>
            <person name="Bennett K.L."/>
            <person name="Superti-Furga G."/>
            <person name="Colinge J."/>
        </authorList>
    </citation>
    <scope>IDENTIFICATION BY MASS SPECTROMETRY [LARGE SCALE ANALYSIS]</scope>
</reference>
<reference key="12">
    <citation type="journal article" date="2013" name="Circ. Arrhythm. Electrophysiol.">
        <title>MOG1 rescues defective trafficking of Na(v)1.5 mutations in Brugada syndrome and sick sinus syndrome.</title>
        <authorList>
            <person name="Chakrabarti S."/>
            <person name="Wu X."/>
            <person name="Yang Z."/>
            <person name="Wu L."/>
            <person name="Yong S.L."/>
            <person name="Zhang C."/>
            <person name="Hu K."/>
            <person name="Wang Q.K."/>
            <person name="Chen Q."/>
        </authorList>
    </citation>
    <scope>FUNCTION</scope>
</reference>
<reference key="13">
    <citation type="journal article" date="2011" name="Can. J. Cardiol.">
        <title>A novel nonsense variant in Nav1.5 cofactor MOG1 eliminates its sodium current increasing effect and may increase the risk of arrhythmias.</title>
        <authorList>
            <person name="Olesen M.S."/>
            <person name="Jensen N.F."/>
            <person name="Holst A.G."/>
            <person name="Nielsen J.B."/>
            <person name="Tfelt-Hansen J."/>
            <person name="Jespersen T."/>
            <person name="Sajadieh A."/>
            <person name="Haunsoe S."/>
            <person name="Lund J.T."/>
            <person name="Calloe K."/>
            <person name="Schmitt N."/>
            <person name="Svendsen J.H."/>
        </authorList>
    </citation>
    <scope>VARIANT 61-GLU--GLN-186 DEL</scope>
    <scope>CHARACTERIZATION OF VARIANT 61-GLU--GLN-186 DEL</scope>
    <scope>FUNCTION</scope>
    <scope>TISSUE SPECIFICITY</scope>
</reference>
<reference key="14">
    <citation type="journal article" date="2011" name="Circ. Cardiovasc. Genet.">
        <title>MOG1: a new susceptibility gene for Brugada syndrome.</title>
        <authorList>
            <person name="Kattygnarath D."/>
            <person name="Maugenre S."/>
            <person name="Neyroud N."/>
            <person name="Balse E."/>
            <person name="Ichai C."/>
            <person name="Denjoy I."/>
            <person name="Dilanian G."/>
            <person name="Martins R.P."/>
            <person name="Fressart V."/>
            <person name="Berthet M."/>
            <person name="Schott J.J."/>
            <person name="Leenhardt A."/>
            <person name="Probst V."/>
            <person name="Le Marec H."/>
            <person name="Hainque B."/>
            <person name="Coulombe A."/>
            <person name="Hatem S.N."/>
            <person name="Guicheney P."/>
        </authorList>
    </citation>
    <scope>VARIANT ASP-83</scope>
    <scope>CHARACTERIZATION OF VARIANT ASP-83</scope>
    <scope>FUNCTION</scope>
    <scope>SUBCELLULAR LOCATION</scope>
</reference>
<reference key="15">
    <citation type="journal article" date="2014" name="Cardiol. J.">
        <title>Brugada syndrome and p.E61X_RANGRF.</title>
        <authorList>
            <person name="Campuzano O."/>
            <person name="Berne P."/>
            <person name="Selga E."/>
            <person name="Allegue C."/>
            <person name="Iglesias A."/>
            <person name="Brugada J."/>
            <person name="Brugada R."/>
        </authorList>
    </citation>
    <scope>VARIANT 61-GLU--GLN-186 DEL</scope>
</reference>
<reference key="16">
    <citation type="journal article" date="2018" name="J. Mol. Cell Biol.">
        <title>Mitosis-specific acetylation tunes Ran effector binding for chromosome segregation.</title>
        <authorList>
            <person name="Bao X."/>
            <person name="Liu H."/>
            <person name="Liu X."/>
            <person name="Ruan K."/>
            <person name="Zhang Y."/>
            <person name="Zhang Z."/>
            <person name="Hu Q."/>
            <person name="Liu Y."/>
            <person name="Akram S."/>
            <person name="Zhang J."/>
            <person name="Gong Q."/>
            <person name="Wang W."/>
            <person name="Yuan X."/>
            <person name="Li J."/>
            <person name="Zhao L."/>
            <person name="Dou Z."/>
            <person name="Tian R."/>
            <person name="Yao X."/>
            <person name="Wu J."/>
            <person name="Shi Y."/>
        </authorList>
    </citation>
    <scope>STRUCTURE BY NMR</scope>
    <scope>FUNCTION</scope>
    <scope>INTERACTION WITH RAN</scope>
    <scope>MUTAGENESIS OF ASP-27; GLU-50; GLU-53 AND ASP-70</scope>
</reference>
<gene>
    <name type="primary">RANGRF</name>
    <name type="synonym">MOG1</name>
    <name type="synonym">RANGNRF</name>
    <name type="ORF">HSPC165</name>
    <name type="ORF">HSPC236</name>
    <name type="ORF">MDS5</name>
</gene>
<comment type="function">
    <text evidence="2 3 5 6 8">May regulate the intracellular trafficking of RAN (PubMed:11290418). Promotes guanine nucleotide release from RAN and inhibits binding of new GTP by preventing the binding of the RAN guanine nucleotide exchange factor RCC1 (PubMed:29040603). Regulates the levels of GTP-bound RAN in the nucleus, and thereby plays a role in the regulation of RAN-dependent mitotic spindle dynamics (PubMed:29040603). Enhances the expression of SCN5A at the cell membrane in cardiomyocytes (PubMed:18184654, PubMed:21621375, PubMed:23420830).</text>
</comment>
<comment type="subunit">
    <text evidence="1 2 3 8">Monomer. Interacts with RAN, both RAN-GTP and RAN-GDP (PubMed:11290418, PubMed:29040603). Competes with RCC1 for a common binding site on RAN and thereby inhibits RCC1-mediated nucleotide exchange (PubMed:29040603). Forms a complex with RAN-GTP and RANBP1 (By similarity). Interacts with the cytoplasmic loop 2 of SCN5A (PubMed:18184654).</text>
</comment>
<comment type="interaction">
    <interactant intactId="EBI-9116212">
        <id>Q9HD47</id>
    </interactant>
    <interactant intactId="EBI-627047">
        <id>Q01130</id>
        <label>SRSF2</label>
    </interactant>
    <organismsDiffer>false</organismsDiffer>
    <experiments>2</experiments>
</comment>
<comment type="interaction">
    <interactant intactId="EBI-9116212">
        <id>Q9HD47</id>
    </interactant>
    <interactant intactId="EBI-7115319">
        <id>Q14584</id>
        <label>ZNF266</label>
    </interactant>
    <organismsDiffer>false</organismsDiffer>
    <experiments>2</experiments>
</comment>
<comment type="interaction">
    <interactant intactId="EBI-9089733">
        <id>Q9HD47-3</id>
    </interactant>
    <interactant intactId="EBI-718729">
        <id>P55212</id>
        <label>CASP6</label>
    </interactant>
    <organismsDiffer>false</organismsDiffer>
    <experiments>3</experiments>
</comment>
<comment type="interaction">
    <interactant intactId="EBI-9089733">
        <id>Q9HD47-3</id>
    </interactant>
    <interactant intactId="EBI-1054228">
        <id>P41091</id>
        <label>EIF2S3</label>
    </interactant>
    <organismsDiffer>false</organismsDiffer>
    <experiments>3</experiments>
</comment>
<comment type="interaction">
    <interactant intactId="EBI-9089733">
        <id>Q9HD47-3</id>
    </interactant>
    <interactant intactId="EBI-348399">
        <id>P22607</id>
        <label>FGFR3</label>
    </interactant>
    <organismsDiffer>false</organismsDiffer>
    <experiments>3</experiments>
</comment>
<comment type="interaction">
    <interactant intactId="EBI-9089733">
        <id>Q9HD47-3</id>
    </interactant>
    <interactant intactId="EBI-10226858">
        <id>Q0VDC6</id>
        <label>FKBP1A</label>
    </interactant>
    <organismsDiffer>false</organismsDiffer>
    <experiments>3</experiments>
</comment>
<comment type="interaction">
    <interactant intactId="EBI-9089733">
        <id>Q9HD47-3</id>
    </interactant>
    <interactant intactId="EBI-351506">
        <id>P06396</id>
        <label>GSN</label>
    </interactant>
    <organismsDiffer>false</organismsDiffer>
    <experiments>3</experiments>
</comment>
<comment type="interaction">
    <interactant intactId="EBI-9089733">
        <id>Q9HD47-3</id>
    </interactant>
    <interactant intactId="EBI-356991">
        <id>P54652</id>
        <label>HSPA2</label>
    </interactant>
    <organismsDiffer>false</organismsDiffer>
    <experiments>3</experiments>
</comment>
<comment type="interaction">
    <interactant intactId="EBI-9089733">
        <id>Q9HD47-3</id>
    </interactant>
    <interactant intactId="EBI-21591415">
        <id>P13473-2</id>
        <label>LAMP2</label>
    </interactant>
    <organismsDiffer>false</organismsDiffer>
    <experiments>3</experiments>
</comment>
<comment type="interaction">
    <interactant intactId="EBI-9089733">
        <id>Q9HD47-3</id>
    </interactant>
    <interactant intactId="EBI-286642">
        <id>P62826</id>
        <label>RAN</label>
    </interactant>
    <organismsDiffer>false</organismsDiffer>
    <experiments>3</experiments>
</comment>
<comment type="subcellular location">
    <subcellularLocation>
        <location evidence="2">Nucleus</location>
    </subcellularLocation>
    <subcellularLocation>
        <location evidence="4">Cytoplasm</location>
        <location evidence="4">Perinuclear region</location>
    </subcellularLocation>
    <subcellularLocation>
        <location evidence="2 4">Cytoplasm</location>
    </subcellularLocation>
    <subcellularLocation>
        <location evidence="4">Cell membrane</location>
        <topology evidence="15">Peripheral membrane protein</topology>
        <orientation evidence="15">Cytoplasmic side</orientation>
    </subcellularLocation>
    <text evidence="2">May shuttle between the nucleus and cytoplasm.</text>
</comment>
<comment type="alternative products">
    <event type="alternative splicing"/>
    <isoform>
        <id>Q9HD47-1</id>
        <name>1</name>
        <name>MOG1a</name>
        <sequence type="displayed"/>
    </isoform>
    <isoform>
        <id>Q9HD47-2</id>
        <name>2</name>
        <name>MOG1b</name>
        <sequence type="described" ref="VSP_033060"/>
    </isoform>
    <isoform>
        <id>Q9HD47-3</id>
        <name>3</name>
        <sequence type="described" ref="VSP_033059 VSP_033061"/>
    </isoform>
    <isoform>
        <id>Q9HD47-4</id>
        <name>4</name>
        <sequence type="described" ref="VSP_033057 VSP_033058"/>
    </isoform>
</comment>
<comment type="tissue specificity">
    <text evidence="2 5">Isoform 1 and isoform 2 are ubiquitously expressed (PubMed:11290418). Detected in heart and brain (PubMed:21621375).</text>
</comment>
<comment type="miscellaneous">
    <text evidence="6">Overexpression can rescue the trafficking defect caused by some SCN5A mutations that impair trafficking to the cell membrane.</text>
</comment>
<comment type="similarity">
    <text evidence="14">Belongs to the MOG1 family.</text>
</comment>
<comment type="sequence caution" evidence="14">
    <conflict type="frameshift">
        <sequence resource="EMBL-CDS" id="AAF29129"/>
    </conflict>
</comment>
<comment type="sequence caution" evidence="14">
    <conflict type="frameshift">
        <sequence resource="EMBL-CDS" id="AAF87316"/>
    </conflict>
</comment>
<evidence type="ECO:0000250" key="1">
    <source>
        <dbReference type="UniProtKB" id="Q9JIB0"/>
    </source>
</evidence>
<evidence type="ECO:0000269" key="2">
    <source>
    </source>
</evidence>
<evidence type="ECO:0000269" key="3">
    <source>
    </source>
</evidence>
<evidence type="ECO:0000269" key="4">
    <source>
    </source>
</evidence>
<evidence type="ECO:0000269" key="5">
    <source>
    </source>
</evidence>
<evidence type="ECO:0000269" key="6">
    <source>
    </source>
</evidence>
<evidence type="ECO:0000269" key="7">
    <source>
    </source>
</evidence>
<evidence type="ECO:0000269" key="8">
    <source>
    </source>
</evidence>
<evidence type="ECO:0000303" key="9">
    <source>
    </source>
</evidence>
<evidence type="ECO:0000303" key="10">
    <source>
    </source>
</evidence>
<evidence type="ECO:0000303" key="11">
    <source>
    </source>
</evidence>
<evidence type="ECO:0000303" key="12">
    <source>
    </source>
</evidence>
<evidence type="ECO:0000303" key="13">
    <source ref="5"/>
</evidence>
<evidence type="ECO:0000305" key="14"/>
<evidence type="ECO:0000305" key="15">
    <source>
    </source>
</evidence>
<evidence type="ECO:0007829" key="16">
    <source>
        <dbReference type="PDB" id="5YFG"/>
    </source>
</evidence>
<organism>
    <name type="scientific">Homo sapiens</name>
    <name type="common">Human</name>
    <dbReference type="NCBI Taxonomy" id="9606"/>
    <lineage>
        <taxon>Eukaryota</taxon>
        <taxon>Metazoa</taxon>
        <taxon>Chordata</taxon>
        <taxon>Craniata</taxon>
        <taxon>Vertebrata</taxon>
        <taxon>Euteleostomi</taxon>
        <taxon>Mammalia</taxon>
        <taxon>Eutheria</taxon>
        <taxon>Euarchontoglires</taxon>
        <taxon>Primates</taxon>
        <taxon>Haplorrhini</taxon>
        <taxon>Catarrhini</taxon>
        <taxon>Hominidae</taxon>
        <taxon>Homo</taxon>
    </lineage>
</organism>
<protein>
    <recommendedName>
        <fullName>Ran guanine nucleotide release factor</fullName>
        <shortName>RanGNRF</shortName>
    </recommendedName>
    <alternativeName>
        <fullName>Ran-binding protein MOG1</fullName>
    </alternativeName>
</protein>
<proteinExistence type="evidence at protein level"/>
<feature type="chain" id="PRO_0000330636" description="Ran guanine nucleotide release factor">
    <location>
        <begin position="1"/>
        <end position="186"/>
    </location>
</feature>
<feature type="region of interest" description="Interaction with RAN" evidence="8">
    <location>
        <begin position="27"/>
        <end position="70"/>
    </location>
</feature>
<feature type="splice variant" id="VSP_033057" description="In isoform 4." evidence="12">
    <original>V</original>
    <variation>P</variation>
    <location>
        <position position="118"/>
    </location>
</feature>
<feature type="splice variant" id="VSP_033058" description="In isoform 4." evidence="12">
    <location>
        <begin position="119"/>
        <end position="186"/>
    </location>
</feature>
<feature type="splice variant" id="VSP_033059" description="In isoform 3." evidence="11">
    <original>AKDVTLHQALLRLPQYQTDLLLTFNQPPPDNRSSLGPENLSPAPW</original>
    <variation>RARECVMSWKGGSGDAEIQVSILTLIPLGSKGRDTSSGLAEAAPVPD</variation>
    <location>
        <begin position="119"/>
        <end position="163"/>
    </location>
</feature>
<feature type="splice variant" id="VSP_033060" description="In isoform 2." evidence="9 10 11 13">
    <location>
        <begin position="147"/>
        <end position="186"/>
    </location>
</feature>
<feature type="splice variant" id="VSP_033061" description="In isoform 3." evidence="11">
    <location>
        <begin position="164"/>
        <end position="186"/>
    </location>
</feature>
<feature type="sequence variant" id="VAR_080079" description="Found in patients with cardiac arrhythmias including Brugada syndrome; uncertain significance; loss of function in enhancing the expression of SCN5A at the cell membrane." evidence="5 7">
    <location>
        <begin position="61"/>
        <end position="186"/>
    </location>
</feature>
<feature type="sequence variant" id="VAR_080080" description="Found in patients with Brugada syndrome; uncertain significance; loss of function in enhancing the expression of SCN5A at the cell membrane; dbSNP:rs751751942." evidence="4">
    <original>E</original>
    <variation>D</variation>
    <location>
        <position position="83"/>
    </location>
</feature>
<feature type="mutagenesis site" description="Decreased binding to RAN." evidence="8">
    <original>D</original>
    <variation>K</variation>
    <location>
        <position position="27"/>
    </location>
</feature>
<feature type="mutagenesis site" description="Strongly decreased binding to RAN. Abolishes binding to RAN; when associated with K-53." evidence="8">
    <original>E</original>
    <variation>K</variation>
    <location>
        <position position="50"/>
    </location>
</feature>
<feature type="mutagenesis site" description="Decreased binding to RAN. Abolishes binding to RAN; when associated with K-50." evidence="8">
    <original>E</original>
    <variation>K</variation>
    <location>
        <position position="53"/>
    </location>
</feature>
<feature type="mutagenesis site" description="Decreased binding to RAN." evidence="8">
    <original>D</original>
    <variation>K</variation>
    <location>
        <position position="70"/>
    </location>
</feature>
<feature type="sequence conflict" description="In Ref. 3; AAF36156." evidence="14" ref="3">
    <original>ALR</original>
    <variation>PE</variation>
    <location>
        <begin position="94"/>
        <end position="96"/>
    </location>
</feature>
<feature type="strand" evidence="16">
    <location>
        <begin position="6"/>
        <end position="8"/>
    </location>
</feature>
<feature type="turn" evidence="16">
    <location>
        <begin position="10"/>
        <end position="12"/>
    </location>
</feature>
<feature type="strand" evidence="16">
    <location>
        <begin position="13"/>
        <end position="17"/>
    </location>
</feature>
<feature type="helix" evidence="16">
    <location>
        <begin position="25"/>
        <end position="27"/>
    </location>
</feature>
<feature type="strand" evidence="16">
    <location>
        <begin position="35"/>
        <end position="40"/>
    </location>
</feature>
<feature type="turn" evidence="16">
    <location>
        <begin position="41"/>
        <end position="44"/>
    </location>
</feature>
<feature type="strand" evidence="16">
    <location>
        <begin position="45"/>
        <end position="50"/>
    </location>
</feature>
<feature type="helix" evidence="16">
    <location>
        <begin position="61"/>
        <end position="71"/>
    </location>
</feature>
<feature type="turn" evidence="16">
    <location>
        <begin position="72"/>
        <end position="74"/>
    </location>
</feature>
<feature type="strand" evidence="16">
    <location>
        <begin position="81"/>
        <end position="87"/>
    </location>
</feature>
<feature type="helix" evidence="16">
    <location>
        <begin position="90"/>
        <end position="92"/>
    </location>
</feature>
<feature type="strand" evidence="16">
    <location>
        <begin position="100"/>
        <end position="108"/>
    </location>
</feature>
<feature type="strand" evidence="16">
    <location>
        <begin position="123"/>
        <end position="131"/>
    </location>
</feature>
<feature type="turn" evidence="16">
    <location>
        <begin position="132"/>
        <end position="135"/>
    </location>
</feature>
<feature type="strand" evidence="16">
    <location>
        <begin position="136"/>
        <end position="144"/>
    </location>
</feature>
<feature type="strand" evidence="16">
    <location>
        <begin position="156"/>
        <end position="159"/>
    </location>
</feature>
<feature type="helix" evidence="16">
    <location>
        <begin position="165"/>
        <end position="172"/>
    </location>
</feature>
<feature type="helix" evidence="16">
    <location>
        <begin position="173"/>
        <end position="175"/>
    </location>
</feature>
<name>MOG1_HUMAN</name>
<dbReference type="EMBL" id="AF265205">
    <property type="protein sequence ID" value="AAG01291.1"/>
    <property type="molecule type" value="mRNA"/>
</dbReference>
<dbReference type="EMBL" id="AF265206">
    <property type="protein sequence ID" value="AAG01292.1"/>
    <property type="molecule type" value="mRNA"/>
</dbReference>
<dbReference type="EMBL" id="AF168714">
    <property type="protein sequence ID" value="AAF87316.1"/>
    <property type="status" value="ALT_FRAME"/>
    <property type="molecule type" value="mRNA"/>
</dbReference>
<dbReference type="EMBL" id="AF151070">
    <property type="protein sequence ID" value="AAF36156.1"/>
    <property type="molecule type" value="mRNA"/>
</dbReference>
<dbReference type="EMBL" id="AF161514">
    <property type="protein sequence ID" value="AAF29129.1"/>
    <property type="status" value="ALT_FRAME"/>
    <property type="molecule type" value="mRNA"/>
</dbReference>
<dbReference type="EMBL" id="AK290399">
    <property type="protein sequence ID" value="BAF83088.1"/>
    <property type="molecule type" value="mRNA"/>
</dbReference>
<dbReference type="EMBL" id="CR457206">
    <property type="protein sequence ID" value="CAG33487.1"/>
    <property type="molecule type" value="mRNA"/>
</dbReference>
<dbReference type="EMBL" id="CR749387">
    <property type="protein sequence ID" value="CAH18237.1"/>
    <property type="molecule type" value="mRNA"/>
</dbReference>
<dbReference type="EMBL" id="CH471108">
    <property type="protein sequence ID" value="EAW90064.1"/>
    <property type="molecule type" value="Genomic_DNA"/>
</dbReference>
<dbReference type="EMBL" id="CH471108">
    <property type="protein sequence ID" value="EAW90065.1"/>
    <property type="molecule type" value="Genomic_DNA"/>
</dbReference>
<dbReference type="EMBL" id="CH471108">
    <property type="protein sequence ID" value="EAW90066.1"/>
    <property type="molecule type" value="Genomic_DNA"/>
</dbReference>
<dbReference type="EMBL" id="BC006486">
    <property type="protein sequence ID" value="AAH06486.1"/>
    <property type="molecule type" value="mRNA"/>
</dbReference>
<dbReference type="EMBL" id="BC012552">
    <property type="protein sequence ID" value="AAH12552.1"/>
    <property type="molecule type" value="mRNA"/>
</dbReference>
<dbReference type="EMBL" id="BC100017">
    <property type="protein sequence ID" value="AAI00018.1"/>
    <property type="molecule type" value="mRNA"/>
</dbReference>
<dbReference type="CCDS" id="CCDS11137.1">
    <molecule id="Q9HD47-1"/>
</dbReference>
<dbReference type="CCDS" id="CCDS54086.1">
    <molecule id="Q9HD47-2"/>
</dbReference>
<dbReference type="CCDS" id="CCDS54087.1">
    <molecule id="Q9HD47-3"/>
</dbReference>
<dbReference type="CCDS" id="CCDS82066.1">
    <molecule id="Q9HD47-4"/>
</dbReference>
<dbReference type="RefSeq" id="NP_001171272.1">
    <molecule id="Q9HD47-2"/>
    <property type="nucleotide sequence ID" value="NM_001177801.2"/>
</dbReference>
<dbReference type="RefSeq" id="NP_001171273.1">
    <molecule id="Q9HD47-3"/>
    <property type="nucleotide sequence ID" value="NM_001177802.2"/>
</dbReference>
<dbReference type="RefSeq" id="NP_001317056.1">
    <molecule id="Q9HD47-4"/>
    <property type="nucleotide sequence ID" value="NM_001330127.2"/>
</dbReference>
<dbReference type="RefSeq" id="NP_057576.2">
    <molecule id="Q9HD47-1"/>
    <property type="nucleotide sequence ID" value="NM_016492.4"/>
</dbReference>
<dbReference type="PDB" id="5YFG">
    <property type="method" value="NMR"/>
    <property type="chains" value="A=1-186"/>
</dbReference>
<dbReference type="PDBsum" id="5YFG"/>
<dbReference type="SMR" id="Q9HD47"/>
<dbReference type="BioGRID" id="118866">
    <property type="interactions" value="32"/>
</dbReference>
<dbReference type="FunCoup" id="Q9HD47">
    <property type="interactions" value="716"/>
</dbReference>
<dbReference type="IntAct" id="Q9HD47">
    <property type="interactions" value="36"/>
</dbReference>
<dbReference type="STRING" id="9606.ENSP00000226105"/>
<dbReference type="iPTMnet" id="Q9HD47"/>
<dbReference type="PhosphoSitePlus" id="Q9HD47"/>
<dbReference type="BioMuta" id="RANGRF"/>
<dbReference type="DMDM" id="74718913"/>
<dbReference type="jPOST" id="Q9HD47"/>
<dbReference type="MassIVE" id="Q9HD47"/>
<dbReference type="PaxDb" id="9606-ENSP00000226105"/>
<dbReference type="PeptideAtlas" id="Q9HD47"/>
<dbReference type="ProteomicsDB" id="81833">
    <molecule id="Q9HD47-1"/>
</dbReference>
<dbReference type="ProteomicsDB" id="81834">
    <molecule id="Q9HD47-2"/>
</dbReference>
<dbReference type="ProteomicsDB" id="81835">
    <molecule id="Q9HD47-3"/>
</dbReference>
<dbReference type="ProteomicsDB" id="81836">
    <molecule id="Q9HD47-4"/>
</dbReference>
<dbReference type="Pumba" id="Q9HD47"/>
<dbReference type="Antibodypedia" id="24637">
    <property type="antibodies" value="51 antibodies from 17 providers"/>
</dbReference>
<dbReference type="DNASU" id="29098"/>
<dbReference type="Ensembl" id="ENST00000226105.11">
    <molecule id="Q9HD47-1"/>
    <property type="protein sequence ID" value="ENSP00000226105.6"/>
    <property type="gene ID" value="ENSG00000108961.14"/>
</dbReference>
<dbReference type="Ensembl" id="ENST00000407006.8">
    <molecule id="Q9HD47-2"/>
    <property type="protein sequence ID" value="ENSP00000383940.4"/>
    <property type="gene ID" value="ENSG00000108961.14"/>
</dbReference>
<dbReference type="Ensembl" id="ENST00000439238.3">
    <molecule id="Q9HD47-3"/>
    <property type="protein sequence ID" value="ENSP00000413190.3"/>
    <property type="gene ID" value="ENSG00000108961.14"/>
</dbReference>
<dbReference type="Ensembl" id="ENST00000580434.5">
    <molecule id="Q9HD47-4"/>
    <property type="protein sequence ID" value="ENSP00000462310.1"/>
    <property type="gene ID" value="ENSG00000108961.14"/>
</dbReference>
<dbReference type="GeneID" id="29098"/>
<dbReference type="KEGG" id="hsa:29098"/>
<dbReference type="MANE-Select" id="ENST00000226105.11">
    <property type="protein sequence ID" value="ENSP00000226105.6"/>
    <property type="RefSeq nucleotide sequence ID" value="NM_016492.5"/>
    <property type="RefSeq protein sequence ID" value="NP_057576.2"/>
</dbReference>
<dbReference type="UCSC" id="uc002gkv.4">
    <molecule id="Q9HD47-1"/>
    <property type="organism name" value="human"/>
</dbReference>
<dbReference type="AGR" id="HGNC:17679"/>
<dbReference type="CTD" id="29098"/>
<dbReference type="DisGeNET" id="29098"/>
<dbReference type="GeneCards" id="RANGRF"/>
<dbReference type="GeneReviews" id="RANGRF"/>
<dbReference type="HGNC" id="HGNC:17679">
    <property type="gene designation" value="RANGRF"/>
</dbReference>
<dbReference type="HPA" id="ENSG00000108961">
    <property type="expression patterns" value="Low tissue specificity"/>
</dbReference>
<dbReference type="MalaCards" id="RANGRF"/>
<dbReference type="MIM" id="607954">
    <property type="type" value="gene"/>
</dbReference>
<dbReference type="neXtProt" id="NX_Q9HD47"/>
<dbReference type="OpenTargets" id="ENSG00000108961"/>
<dbReference type="Orphanet" id="130">
    <property type="disease" value="Brugada syndrome"/>
</dbReference>
<dbReference type="PharmGKB" id="PA162400661"/>
<dbReference type="VEuPathDB" id="HostDB:ENSG00000108961"/>
<dbReference type="eggNOG" id="KOG3329">
    <property type="taxonomic scope" value="Eukaryota"/>
</dbReference>
<dbReference type="GeneTree" id="ENSGT00390000013834"/>
<dbReference type="HOGENOM" id="CLU_081345_2_1_1"/>
<dbReference type="InParanoid" id="Q9HD47"/>
<dbReference type="OMA" id="ECSSAWM"/>
<dbReference type="OrthoDB" id="10255285at2759"/>
<dbReference type="PAN-GO" id="Q9HD47">
    <property type="GO annotations" value="9 GO annotations based on evolutionary models"/>
</dbReference>
<dbReference type="PhylomeDB" id="Q9HD47"/>
<dbReference type="TreeFam" id="TF332074"/>
<dbReference type="PathwayCommons" id="Q9HD47"/>
<dbReference type="Reactome" id="R-HSA-5576892">
    <property type="pathway name" value="Phase 0 - rapid depolarisation"/>
</dbReference>
<dbReference type="SignaLink" id="Q9HD47"/>
<dbReference type="BioGRID-ORCS" id="29098">
    <property type="hits" value="11 hits in 1165 CRISPR screens"/>
</dbReference>
<dbReference type="GenomeRNAi" id="29098"/>
<dbReference type="Pharos" id="Q9HD47">
    <property type="development level" value="Tbio"/>
</dbReference>
<dbReference type="PRO" id="PR:Q9HD47"/>
<dbReference type="Proteomes" id="UP000005640">
    <property type="component" value="Chromosome 17"/>
</dbReference>
<dbReference type="RNAct" id="Q9HD47">
    <property type="molecule type" value="protein"/>
</dbReference>
<dbReference type="Bgee" id="ENSG00000108961">
    <property type="expression patterns" value="Expressed in left testis and 196 other cell types or tissues"/>
</dbReference>
<dbReference type="GO" id="GO:0005901">
    <property type="term" value="C:caveola"/>
    <property type="evidence" value="ECO:0000314"/>
    <property type="project" value="BHF-UCL"/>
</dbReference>
<dbReference type="GO" id="GO:0005737">
    <property type="term" value="C:cytoplasm"/>
    <property type="evidence" value="ECO:0000314"/>
    <property type="project" value="BHF-UCL"/>
</dbReference>
<dbReference type="GO" id="GO:0005829">
    <property type="term" value="C:cytosol"/>
    <property type="evidence" value="ECO:0000314"/>
    <property type="project" value="HPA"/>
</dbReference>
<dbReference type="GO" id="GO:0014704">
    <property type="term" value="C:intercalated disc"/>
    <property type="evidence" value="ECO:0000250"/>
    <property type="project" value="BHF-UCL"/>
</dbReference>
<dbReference type="GO" id="GO:0005654">
    <property type="term" value="C:nucleoplasm"/>
    <property type="evidence" value="ECO:0000314"/>
    <property type="project" value="HPA"/>
</dbReference>
<dbReference type="GO" id="GO:0005634">
    <property type="term" value="C:nucleus"/>
    <property type="evidence" value="ECO:0000314"/>
    <property type="project" value="BHF-UCL"/>
</dbReference>
<dbReference type="GO" id="GO:0048471">
    <property type="term" value="C:perinuclear region of cytoplasm"/>
    <property type="evidence" value="ECO:0007669"/>
    <property type="project" value="UniProtKB-SubCell"/>
</dbReference>
<dbReference type="GO" id="GO:0005886">
    <property type="term" value="C:plasma membrane"/>
    <property type="evidence" value="ECO:0000305"/>
    <property type="project" value="BHF-UCL"/>
</dbReference>
<dbReference type="GO" id="GO:0005791">
    <property type="term" value="C:rough endoplasmic reticulum"/>
    <property type="evidence" value="ECO:0000314"/>
    <property type="project" value="BHF-UCL"/>
</dbReference>
<dbReference type="GO" id="GO:0099103">
    <property type="term" value="F:channel activator activity"/>
    <property type="evidence" value="ECO:0000314"/>
    <property type="project" value="BHF-UCL"/>
</dbReference>
<dbReference type="GO" id="GO:0005085">
    <property type="term" value="F:guanyl-nucleotide exchange factor activity"/>
    <property type="evidence" value="ECO:0000250"/>
    <property type="project" value="BHF-UCL"/>
</dbReference>
<dbReference type="GO" id="GO:0031267">
    <property type="term" value="F:small GTPase binding"/>
    <property type="evidence" value="ECO:0000353"/>
    <property type="project" value="UniProtKB"/>
</dbReference>
<dbReference type="GO" id="GO:0017080">
    <property type="term" value="F:sodium channel regulator activity"/>
    <property type="evidence" value="ECO:0000314"/>
    <property type="project" value="BHF-UCL"/>
</dbReference>
<dbReference type="GO" id="GO:0044325">
    <property type="term" value="F:transmembrane transporter binding"/>
    <property type="evidence" value="ECO:0000353"/>
    <property type="project" value="BHF-UCL"/>
</dbReference>
<dbReference type="GO" id="GO:0006888">
    <property type="term" value="P:endoplasmic reticulum to Golgi vesicle-mediated transport"/>
    <property type="evidence" value="ECO:0000315"/>
    <property type="project" value="BHF-UCL"/>
</dbReference>
<dbReference type="GO" id="GO:0060047">
    <property type="term" value="P:heart contraction"/>
    <property type="evidence" value="ECO:0000318"/>
    <property type="project" value="GO_Central"/>
</dbReference>
<dbReference type="GO" id="GO:0090307">
    <property type="term" value="P:mitotic spindle assembly"/>
    <property type="evidence" value="ECO:0000315"/>
    <property type="project" value="UniProtKB"/>
</dbReference>
<dbReference type="GO" id="GO:1900827">
    <property type="term" value="P:positive regulation of membrane depolarization during cardiac muscle cell action potential"/>
    <property type="evidence" value="ECO:0000314"/>
    <property type="project" value="BHF-UCL"/>
</dbReference>
<dbReference type="GO" id="GO:2000010">
    <property type="term" value="P:positive regulation of protein localization to cell surface"/>
    <property type="evidence" value="ECO:0000314"/>
    <property type="project" value="BHF-UCL"/>
</dbReference>
<dbReference type="GO" id="GO:1903078">
    <property type="term" value="P:positive regulation of protein localization to plasma membrane"/>
    <property type="evidence" value="ECO:0000315"/>
    <property type="project" value="BHF-UCL"/>
</dbReference>
<dbReference type="GO" id="GO:0032527">
    <property type="term" value="P:protein exit from endoplasmic reticulum"/>
    <property type="evidence" value="ECO:0000315"/>
    <property type="project" value="BHF-UCL"/>
</dbReference>
<dbReference type="GO" id="GO:0098905">
    <property type="term" value="P:regulation of bundle of His cell action potential"/>
    <property type="evidence" value="ECO:0000315"/>
    <property type="project" value="BHF-UCL"/>
</dbReference>
<dbReference type="GO" id="GO:0098909">
    <property type="term" value="P:regulation of cardiac muscle cell action potential involved in regulation of contraction"/>
    <property type="evidence" value="ECO:0000315"/>
    <property type="project" value="BHF-UCL"/>
</dbReference>
<dbReference type="GO" id="GO:0002027">
    <property type="term" value="P:regulation of heart rate"/>
    <property type="evidence" value="ECO:0000304"/>
    <property type="project" value="BHF-UCL"/>
</dbReference>
<dbReference type="GO" id="GO:0003254">
    <property type="term" value="P:regulation of membrane depolarization"/>
    <property type="evidence" value="ECO:0000315"/>
    <property type="project" value="BHF-UCL"/>
</dbReference>
<dbReference type="GO" id="GO:1900825">
    <property type="term" value="P:regulation of membrane depolarization during cardiac muscle cell action potential"/>
    <property type="evidence" value="ECO:0000315"/>
    <property type="project" value="BHF-UCL"/>
</dbReference>
<dbReference type="GO" id="GO:1902305">
    <property type="term" value="P:regulation of sodium ion transmembrane transport"/>
    <property type="evidence" value="ECO:0000314"/>
    <property type="project" value="BHF-UCL"/>
</dbReference>
<dbReference type="CDD" id="cd00224">
    <property type="entry name" value="Mog1"/>
    <property type="match status" value="1"/>
</dbReference>
<dbReference type="FunFam" id="3.40.1000.10:FF:000004">
    <property type="entry name" value="Probable ran guanine nucleotide release factor"/>
    <property type="match status" value="1"/>
</dbReference>
<dbReference type="Gene3D" id="3.40.1000.10">
    <property type="entry name" value="Mog1/PsbP, alpha/beta/alpha sandwich"/>
    <property type="match status" value="1"/>
</dbReference>
<dbReference type="InterPro" id="IPR007681">
    <property type="entry name" value="Mog1"/>
</dbReference>
<dbReference type="InterPro" id="IPR016123">
    <property type="entry name" value="Mog1/PsbP_a/b/a-sand"/>
</dbReference>
<dbReference type="PANTHER" id="PTHR15837">
    <property type="entry name" value="RAN GUANINE NUCLEOTIDE RELEASE FACTOR"/>
    <property type="match status" value="1"/>
</dbReference>
<dbReference type="PANTHER" id="PTHR15837:SF0">
    <property type="entry name" value="RAN GUANINE NUCLEOTIDE RELEASE FACTOR"/>
    <property type="match status" value="1"/>
</dbReference>
<dbReference type="Pfam" id="PF04603">
    <property type="entry name" value="Mog1"/>
    <property type="match status" value="1"/>
</dbReference>
<dbReference type="SUPFAM" id="SSF55724">
    <property type="entry name" value="Mog1p/PsbP-like"/>
    <property type="match status" value="1"/>
</dbReference>
<keyword id="KW-0002">3D-structure</keyword>
<keyword id="KW-0025">Alternative splicing</keyword>
<keyword id="KW-1003">Cell membrane</keyword>
<keyword id="KW-0963">Cytoplasm</keyword>
<keyword id="KW-0344">Guanine-nucleotide releasing factor</keyword>
<keyword id="KW-0472">Membrane</keyword>
<keyword id="KW-0539">Nucleus</keyword>
<keyword id="KW-0653">Protein transport</keyword>
<keyword id="KW-1267">Proteomics identification</keyword>
<keyword id="KW-1185">Reference proteome</keyword>
<keyword id="KW-0813">Transport</keyword>
<accession>Q9HD47</accession>
<accession>D3DTR6</accession>
<accession>Q68DI3</accession>
<accession>Q9BR68</accession>
<accession>Q9HD48</accession>
<accession>Q9NRU9</accession>
<accession>Q9P001</accession>
<accession>Q9P0P2</accession>
<sequence>MEPTRDCPLFGGAFSAILPMGAIDVSDLRPVPDNQEVFCHPVTDQSLIVELLELQAHVRGEAAARYHFEDVGGVQGARAVHVESVQPLSLENLALRGRCQEAWVLSGKQQIAKENQQVAKDVTLHQALLRLPQYQTDLLLTFNQPPPDNRSSLGPENLSPAPWSLGDFEQLVTSLTLHDPNIFGPQ</sequence>